<gene>
    <name type="primary">PFY1</name>
    <name type="synonym">PFY</name>
    <name type="synonym">PRF1</name>
    <name type="ordered locus">YOR122C</name>
    <name type="ORF">O3275</name>
    <name type="ORF">YOR3275C</name>
</gene>
<reference key="1">
    <citation type="journal article" date="1988" name="Mol. Cell. Biol.">
        <title>The intron-containing gene for yeast profilin (PFY) encodes a vital function.</title>
        <authorList>
            <person name="Magdolen V."/>
            <person name="Oechsner U."/>
            <person name="Mueller G."/>
            <person name="Bandlow W."/>
        </authorList>
    </citation>
    <scope>NUCLEOTIDE SEQUENCE [GENOMIC DNA]</scope>
</reference>
<reference key="2">
    <citation type="journal article" date="1987" name="Nucleic Acids Res.">
        <title>The cDNA and deduced amino acid sequence of profilin from Saccharomyces cerevisiae.</title>
        <authorList>
            <person name="Oechsner U."/>
            <person name="Magdolen V."/>
            <person name="Bandlow W."/>
        </authorList>
    </citation>
    <scope>NUCLEOTIDE SEQUENCE [MRNA]</scope>
    <source>
        <strain>ATCC 26787 / X2180-1B</strain>
    </source>
</reference>
<reference key="3">
    <citation type="journal article" date="1996" name="Yeast">
        <title>Sequencing and analysis of 51 kb on the right arm of chromosome XV from Saccharomyces cerevisiae reveals 30 open reading frames.</title>
        <authorList>
            <person name="Wiemann S."/>
            <person name="Rechmann S."/>
            <person name="Benes V."/>
            <person name="Voss H."/>
            <person name="Schwager C."/>
            <person name="Vlcek C."/>
            <person name="Stegemann J."/>
            <person name="Zimmermann J."/>
            <person name="Erfle H."/>
            <person name="Paces V."/>
            <person name="Ansorge W."/>
        </authorList>
    </citation>
    <scope>NUCLEOTIDE SEQUENCE [GENOMIC DNA]</scope>
    <source>
        <strain>ATCC 96604 / S288c / FY1679</strain>
    </source>
</reference>
<reference key="4">
    <citation type="journal article" date="1997" name="Yeast">
        <title>DNA sequencing and analysis of 130 kb from yeast chromosome XV.</title>
        <authorList>
            <person name="Voss H."/>
            <person name="Benes V."/>
            <person name="Andrade M.A."/>
            <person name="Valencia A."/>
            <person name="Rechmann S."/>
            <person name="Teodoru C."/>
            <person name="Schwager C."/>
            <person name="Paces V."/>
            <person name="Sander C."/>
            <person name="Ansorge W."/>
        </authorList>
    </citation>
    <scope>NUCLEOTIDE SEQUENCE [GENOMIC DNA]</scope>
</reference>
<reference key="5">
    <citation type="journal article" date="1997" name="Nature">
        <title>The nucleotide sequence of Saccharomyces cerevisiae chromosome XV.</title>
        <authorList>
            <person name="Dujon B."/>
            <person name="Albermann K."/>
            <person name="Aldea M."/>
            <person name="Alexandraki D."/>
            <person name="Ansorge W."/>
            <person name="Arino J."/>
            <person name="Benes V."/>
            <person name="Bohn C."/>
            <person name="Bolotin-Fukuhara M."/>
            <person name="Bordonne R."/>
            <person name="Boyer J."/>
            <person name="Camasses A."/>
            <person name="Casamayor A."/>
            <person name="Casas C."/>
            <person name="Cheret G."/>
            <person name="Cziepluch C."/>
            <person name="Daignan-Fornier B."/>
            <person name="Dang V.-D."/>
            <person name="de Haan M."/>
            <person name="Delius H."/>
            <person name="Durand P."/>
            <person name="Fairhead C."/>
            <person name="Feldmann H."/>
            <person name="Gaillon L."/>
            <person name="Galisson F."/>
            <person name="Gamo F.-J."/>
            <person name="Gancedo C."/>
            <person name="Goffeau A."/>
            <person name="Goulding S.E."/>
            <person name="Grivell L.A."/>
            <person name="Habbig B."/>
            <person name="Hand N.J."/>
            <person name="Hani J."/>
            <person name="Hattenhorst U."/>
            <person name="Hebling U."/>
            <person name="Hernando Y."/>
            <person name="Herrero E."/>
            <person name="Heumann K."/>
            <person name="Hiesel R."/>
            <person name="Hilger F."/>
            <person name="Hofmann B."/>
            <person name="Hollenberg C.P."/>
            <person name="Hughes B."/>
            <person name="Jauniaux J.-C."/>
            <person name="Kalogeropoulos A."/>
            <person name="Katsoulou C."/>
            <person name="Kordes E."/>
            <person name="Lafuente M.J."/>
            <person name="Landt O."/>
            <person name="Louis E.J."/>
            <person name="Maarse A.C."/>
            <person name="Madania A."/>
            <person name="Mannhaupt G."/>
            <person name="Marck C."/>
            <person name="Martin R.P."/>
            <person name="Mewes H.-W."/>
            <person name="Michaux G."/>
            <person name="Paces V."/>
            <person name="Parle-McDermott A.G."/>
            <person name="Pearson B.M."/>
            <person name="Perrin A."/>
            <person name="Pettersson B."/>
            <person name="Poch O."/>
            <person name="Pohl T.M."/>
            <person name="Poirey R."/>
            <person name="Portetelle D."/>
            <person name="Pujol A."/>
            <person name="Purnelle B."/>
            <person name="Ramezani Rad M."/>
            <person name="Rechmann S."/>
            <person name="Schwager C."/>
            <person name="Schweizer M."/>
            <person name="Sor F."/>
            <person name="Sterky F."/>
            <person name="Tarassov I.A."/>
            <person name="Teodoru C."/>
            <person name="Tettelin H."/>
            <person name="Thierry A."/>
            <person name="Tobiasch E."/>
            <person name="Tzermia M."/>
            <person name="Uhlen M."/>
            <person name="Unseld M."/>
            <person name="Valens M."/>
            <person name="Vandenbol M."/>
            <person name="Vetter I."/>
            <person name="Vlcek C."/>
            <person name="Voet M."/>
            <person name="Volckaert G."/>
            <person name="Voss H."/>
            <person name="Wambutt R."/>
            <person name="Wedler H."/>
            <person name="Wiemann S."/>
            <person name="Winsor B."/>
            <person name="Wolfe K.H."/>
            <person name="Zollner A."/>
            <person name="Zumstein E."/>
            <person name="Kleine K."/>
        </authorList>
    </citation>
    <scope>NUCLEOTIDE SEQUENCE [LARGE SCALE GENOMIC DNA]</scope>
    <source>
        <strain>ATCC 204508 / S288c</strain>
    </source>
</reference>
<reference key="6">
    <citation type="journal article" date="2014" name="G3 (Bethesda)">
        <title>The reference genome sequence of Saccharomyces cerevisiae: Then and now.</title>
        <authorList>
            <person name="Engel S.R."/>
            <person name="Dietrich F.S."/>
            <person name="Fisk D.G."/>
            <person name="Binkley G."/>
            <person name="Balakrishnan R."/>
            <person name="Costanzo M.C."/>
            <person name="Dwight S.S."/>
            <person name="Hitz B.C."/>
            <person name="Karra K."/>
            <person name="Nash R.S."/>
            <person name="Weng S."/>
            <person name="Wong E.D."/>
            <person name="Lloyd P."/>
            <person name="Skrzypek M.S."/>
            <person name="Miyasato S.R."/>
            <person name="Simison M."/>
            <person name="Cherry J.M."/>
        </authorList>
    </citation>
    <scope>GENOME REANNOTATION</scope>
    <source>
        <strain>ATCC 204508 / S288c</strain>
    </source>
</reference>
<reference key="7">
    <citation type="journal article" date="1998" name="Biochemistry">
        <title>Structure determination and characterization of Saccharomyces cerevisiae profilin.</title>
        <authorList>
            <person name="Eads J.C."/>
            <person name="Mahoney N.M."/>
            <person name="Vorobiev S."/>
            <person name="Bresnick A.R."/>
            <person name="Wen K.K."/>
            <person name="Rubenstein P.A."/>
            <person name="Haarer B.K."/>
            <person name="Almo S.C."/>
        </authorList>
    </citation>
    <scope>X-RAY CRYSTALLOGRAPHY (2.3 ANGSTROMS)</scope>
</reference>
<feature type="chain" id="PRO_0000199608" description="Profilin">
    <location>
        <begin position="1"/>
        <end position="126"/>
    </location>
</feature>
<feature type="helix" evidence="2">
    <location>
        <begin position="3"/>
        <end position="12"/>
    </location>
</feature>
<feature type="strand" evidence="2">
    <location>
        <begin position="17"/>
        <end position="23"/>
    </location>
</feature>
<feature type="strand" evidence="2">
    <location>
        <begin position="29"/>
        <end position="34"/>
    </location>
</feature>
<feature type="helix" evidence="2">
    <location>
        <begin position="40"/>
        <end position="49"/>
    </location>
</feature>
<feature type="helix" evidence="2">
    <location>
        <begin position="54"/>
        <end position="59"/>
    </location>
</feature>
<feature type="strand" evidence="2">
    <location>
        <begin position="61"/>
        <end position="63"/>
    </location>
</feature>
<feature type="strand" evidence="2">
    <location>
        <begin position="66"/>
        <end position="73"/>
    </location>
</feature>
<feature type="strand" evidence="2">
    <location>
        <begin position="75"/>
        <end position="82"/>
    </location>
</feature>
<feature type="strand" evidence="2">
    <location>
        <begin position="85"/>
        <end position="91"/>
    </location>
</feature>
<feature type="strand" evidence="2">
    <location>
        <begin position="93"/>
        <end position="101"/>
    </location>
</feature>
<feature type="helix" evidence="2">
    <location>
        <begin position="107"/>
        <end position="123"/>
    </location>
</feature>
<accession>P07274</accession>
<accession>D6W2I0</accession>
<comment type="function">
    <text>Binds to actin and affects the structure of the cytoskeleton. At high concentrations, profilin prevents the polymerization of actin, whereas it enhances it at low concentrations. By binding to PIP2, it inhibits the formation of IP3 and DG.</text>
</comment>
<comment type="subunit">
    <text>Occurs in many kinds of cells as a complex with monomeric actin in a 1:1 ratio.</text>
</comment>
<comment type="interaction">
    <interactant intactId="EBI-13892">
        <id>P07274</id>
    </interactant>
    <interactant intactId="EBI-2169">
        <id>P60010</id>
        <label>ACT1</label>
    </interactant>
    <organismsDiffer>false</organismsDiffer>
    <experiments>5</experiments>
</comment>
<comment type="interaction">
    <interactant intactId="EBI-13892">
        <id>P07274</id>
    </interactant>
    <interactant intactId="EBI-129424">
        <id>Q9VEX9</id>
        <label>Bin1</label>
    </interactant>
    <organismsDiffer>true</organismsDiffer>
    <experiments>3</experiments>
</comment>
<comment type="subcellular location">
    <subcellularLocation>
        <location>Cytoplasm</location>
        <location>Cytoskeleton</location>
    </subcellularLocation>
</comment>
<comment type="similarity">
    <text evidence="1">Belongs to the profilin family.</text>
</comment>
<evidence type="ECO:0000305" key="1"/>
<evidence type="ECO:0007829" key="2">
    <source>
        <dbReference type="PDB" id="1YPR"/>
    </source>
</evidence>
<sequence length="126" mass="13677">MSWQAYTDNLIGTGKVDKAVIYSRAGDAVWATSGGLSLQPNEIGEIVQGFDNPAGLQSNGLHIQGQKFMLLRADDRSIYGRHDAEGVVCVRTKQTVIIAHYPPTVQAGEATKIVEQLADYLIGVQY</sequence>
<name>PROF_YEAST</name>
<proteinExistence type="evidence at protein level"/>
<dbReference type="EMBL" id="M23369">
    <property type="protein sequence ID" value="AAA34861.1"/>
    <property type="molecule type" value="Genomic_DNA"/>
</dbReference>
<dbReference type="EMBL" id="Y00469">
    <property type="protein sequence ID" value="CAA68532.1"/>
    <property type="molecule type" value="mRNA"/>
</dbReference>
<dbReference type="EMBL" id="X90518">
    <property type="protein sequence ID" value="CAA62128.1"/>
    <property type="molecule type" value="Genomic_DNA"/>
</dbReference>
<dbReference type="EMBL" id="X94335">
    <property type="protein sequence ID" value="CAA64041.1"/>
    <property type="molecule type" value="Genomic_DNA"/>
</dbReference>
<dbReference type="EMBL" id="Z75030">
    <property type="protein sequence ID" value="CAA99321.1"/>
    <property type="molecule type" value="Genomic_DNA"/>
</dbReference>
<dbReference type="EMBL" id="BK006948">
    <property type="protein sequence ID" value="DAA10896.1"/>
    <property type="molecule type" value="Genomic_DNA"/>
</dbReference>
<dbReference type="PIR" id="A31360">
    <property type="entry name" value="A31360"/>
</dbReference>
<dbReference type="RefSeq" id="NP_014765.3">
    <property type="nucleotide sequence ID" value="NM_001183541.3"/>
</dbReference>
<dbReference type="PDB" id="1K0K">
    <property type="method" value="X-ray"/>
    <property type="resolution" value="2.35 A"/>
    <property type="chains" value="A=2-126"/>
</dbReference>
<dbReference type="PDB" id="1YPR">
    <property type="method" value="X-ray"/>
    <property type="resolution" value="2.30 A"/>
    <property type="chains" value="A/B=2-126"/>
</dbReference>
<dbReference type="PDBsum" id="1K0K"/>
<dbReference type="PDBsum" id="1YPR"/>
<dbReference type="SMR" id="P07274"/>
<dbReference type="BioGRID" id="34517">
    <property type="interactions" value="749"/>
</dbReference>
<dbReference type="DIP" id="DIP-46N"/>
<dbReference type="FunCoup" id="P07274">
    <property type="interactions" value="362"/>
</dbReference>
<dbReference type="IntAct" id="P07274">
    <property type="interactions" value="28"/>
</dbReference>
<dbReference type="MINT" id="P07274"/>
<dbReference type="STRING" id="4932.YOR122C"/>
<dbReference type="iPTMnet" id="P07274"/>
<dbReference type="PaxDb" id="4932-YOR122C"/>
<dbReference type="PeptideAtlas" id="P07274"/>
<dbReference type="EnsemblFungi" id="YOR122C_mRNA">
    <property type="protein sequence ID" value="YOR122C"/>
    <property type="gene ID" value="YOR122C"/>
</dbReference>
<dbReference type="GeneID" id="854289"/>
<dbReference type="KEGG" id="sce:YOR122C"/>
<dbReference type="AGR" id="SGD:S000005648"/>
<dbReference type="SGD" id="S000005648">
    <property type="gene designation" value="PFY1"/>
</dbReference>
<dbReference type="VEuPathDB" id="FungiDB:YOR122C"/>
<dbReference type="eggNOG" id="KOG1755">
    <property type="taxonomic scope" value="Eukaryota"/>
</dbReference>
<dbReference type="GeneTree" id="ENSGT00730000112841"/>
<dbReference type="HOGENOM" id="CLU_120772_1_0_1"/>
<dbReference type="InParanoid" id="P07274"/>
<dbReference type="OMA" id="QGQKFML"/>
<dbReference type="OrthoDB" id="421374at2759"/>
<dbReference type="BioCyc" id="YEAST:G3O-33649-MONOMER"/>
<dbReference type="BioGRID-ORCS" id="854289">
    <property type="hits" value="10 hits in 10 CRISPR screens"/>
</dbReference>
<dbReference type="EvolutionaryTrace" id="P07274"/>
<dbReference type="PRO" id="PR:P07274"/>
<dbReference type="Proteomes" id="UP000002311">
    <property type="component" value="Chromosome XV"/>
</dbReference>
<dbReference type="RNAct" id="P07274">
    <property type="molecule type" value="protein"/>
</dbReference>
<dbReference type="GO" id="GO:0005938">
    <property type="term" value="C:cell cortex"/>
    <property type="evidence" value="ECO:0000318"/>
    <property type="project" value="GO_Central"/>
</dbReference>
<dbReference type="GO" id="GO:0005856">
    <property type="term" value="C:cytoskeleton"/>
    <property type="evidence" value="ECO:0007669"/>
    <property type="project" value="UniProtKB-SubCell"/>
</dbReference>
<dbReference type="GO" id="GO:0005829">
    <property type="term" value="C:cytosol"/>
    <property type="evidence" value="ECO:0000314"/>
    <property type="project" value="SGD"/>
</dbReference>
<dbReference type="GO" id="GO:0003785">
    <property type="term" value="F:actin monomer binding"/>
    <property type="evidence" value="ECO:0000314"/>
    <property type="project" value="SGD"/>
</dbReference>
<dbReference type="GO" id="GO:0005546">
    <property type="term" value="F:phosphatidylinositol-4,5-bisphosphate binding"/>
    <property type="evidence" value="ECO:0000314"/>
    <property type="project" value="SGD"/>
</dbReference>
<dbReference type="GO" id="GO:0070064">
    <property type="term" value="F:proline-rich region binding"/>
    <property type="evidence" value="ECO:0000314"/>
    <property type="project" value="SGD"/>
</dbReference>
<dbReference type="GO" id="GO:0140311">
    <property type="term" value="F:protein sequestering activity"/>
    <property type="evidence" value="ECO:0000314"/>
    <property type="project" value="SGD"/>
</dbReference>
<dbReference type="GO" id="GO:0046907">
    <property type="term" value="P:intracellular transport"/>
    <property type="evidence" value="ECO:0000316"/>
    <property type="project" value="SGD"/>
</dbReference>
<dbReference type="GO" id="GO:1903475">
    <property type="term" value="P:mitotic actomyosin contractile ring assembly"/>
    <property type="evidence" value="ECO:0000315"/>
    <property type="project" value="SGD"/>
</dbReference>
<dbReference type="GO" id="GO:0090338">
    <property type="term" value="P:positive regulation of formin-nucleated actin cable assembly"/>
    <property type="evidence" value="ECO:0000314"/>
    <property type="project" value="SGD"/>
</dbReference>
<dbReference type="CDD" id="cd00148">
    <property type="entry name" value="PROF"/>
    <property type="match status" value="1"/>
</dbReference>
<dbReference type="FunFam" id="3.30.450.30:FF:000001">
    <property type="entry name" value="Profilin"/>
    <property type="match status" value="1"/>
</dbReference>
<dbReference type="Gene3D" id="3.30.450.30">
    <property type="entry name" value="Dynein light chain 2a, cytoplasmic"/>
    <property type="match status" value="1"/>
</dbReference>
<dbReference type="InterPro" id="IPR048278">
    <property type="entry name" value="PFN"/>
</dbReference>
<dbReference type="InterPro" id="IPR005455">
    <property type="entry name" value="PFN_euk"/>
</dbReference>
<dbReference type="InterPro" id="IPR036140">
    <property type="entry name" value="PFN_sf"/>
</dbReference>
<dbReference type="InterPro" id="IPR027310">
    <property type="entry name" value="Profilin_CS"/>
</dbReference>
<dbReference type="PANTHER" id="PTHR11604">
    <property type="entry name" value="PROFILIN"/>
    <property type="match status" value="1"/>
</dbReference>
<dbReference type="PANTHER" id="PTHR11604:SF0">
    <property type="entry name" value="PROFILIN"/>
    <property type="match status" value="1"/>
</dbReference>
<dbReference type="Pfam" id="PF00235">
    <property type="entry name" value="Profilin"/>
    <property type="match status" value="1"/>
</dbReference>
<dbReference type="PRINTS" id="PR00392">
    <property type="entry name" value="PROFILIN"/>
</dbReference>
<dbReference type="PRINTS" id="PR01640">
    <property type="entry name" value="PROFILINPLNT"/>
</dbReference>
<dbReference type="SMART" id="SM00392">
    <property type="entry name" value="PROF"/>
    <property type="match status" value="1"/>
</dbReference>
<dbReference type="SUPFAM" id="SSF55770">
    <property type="entry name" value="Profilin (actin-binding protein)"/>
    <property type="match status" value="1"/>
</dbReference>
<dbReference type="PROSITE" id="PS00414">
    <property type="entry name" value="PROFILIN"/>
    <property type="match status" value="1"/>
</dbReference>
<protein>
    <recommendedName>
        <fullName>Profilin</fullName>
    </recommendedName>
</protein>
<keyword id="KW-0002">3D-structure</keyword>
<keyword id="KW-0009">Actin-binding</keyword>
<keyword id="KW-0963">Cytoplasm</keyword>
<keyword id="KW-0206">Cytoskeleton</keyword>
<keyword id="KW-1185">Reference proteome</keyword>
<organism>
    <name type="scientific">Saccharomyces cerevisiae (strain ATCC 204508 / S288c)</name>
    <name type="common">Baker's yeast</name>
    <dbReference type="NCBI Taxonomy" id="559292"/>
    <lineage>
        <taxon>Eukaryota</taxon>
        <taxon>Fungi</taxon>
        <taxon>Dikarya</taxon>
        <taxon>Ascomycota</taxon>
        <taxon>Saccharomycotina</taxon>
        <taxon>Saccharomycetes</taxon>
        <taxon>Saccharomycetales</taxon>
        <taxon>Saccharomycetaceae</taxon>
        <taxon>Saccharomyces</taxon>
    </lineage>
</organism>